<reference key="1">
    <citation type="submission" date="2008-10" db="EMBL/GenBank/DDBJ databases">
        <title>The complete genome sequence of Helicobacter pylori strain P12.</title>
        <authorList>
            <person name="Fischer W."/>
            <person name="Windhager L."/>
            <person name="Karnholz A."/>
            <person name="Zeiller M."/>
            <person name="Zimmer R."/>
            <person name="Haas R."/>
        </authorList>
    </citation>
    <scope>NUCLEOTIDE SEQUENCE [LARGE SCALE GENOMIC DNA]</scope>
    <source>
        <strain>P12</strain>
    </source>
</reference>
<accession>B6JL03</accession>
<evidence type="ECO:0000255" key="1">
    <source>
        <dbReference type="HAMAP-Rule" id="MF_01520"/>
    </source>
</evidence>
<keyword id="KW-0414">Isoprene biosynthesis</keyword>
<keyword id="KW-0456">Lyase</keyword>
<keyword id="KW-0479">Metal-binding</keyword>
<keyword id="KW-0511">Multifunctional enzyme</keyword>
<keyword id="KW-0548">Nucleotidyltransferase</keyword>
<keyword id="KW-0808">Transferase</keyword>
<comment type="function">
    <text evidence="1">Bifunctional enzyme that catalyzes the formation of 4-diphosphocytidyl-2-C-methyl-D-erythritol from CTP and 2-C-methyl-D-erythritol 4-phosphate (MEP) (IspD), and catalyzes the conversion of 4-diphosphocytidyl-2-C-methyl-D-erythritol 2-phosphate (CDP-ME2P) to 2-C-methyl-D-erythritol 2,4-cyclodiphosphate (ME-CPP) with a corresponding release of cytidine 5-monophosphate (CMP) (IspF).</text>
</comment>
<comment type="catalytic activity">
    <reaction evidence="1">
        <text>2-C-methyl-D-erythritol 4-phosphate + CTP + H(+) = 4-CDP-2-C-methyl-D-erythritol + diphosphate</text>
        <dbReference type="Rhea" id="RHEA:13429"/>
        <dbReference type="ChEBI" id="CHEBI:15378"/>
        <dbReference type="ChEBI" id="CHEBI:33019"/>
        <dbReference type="ChEBI" id="CHEBI:37563"/>
        <dbReference type="ChEBI" id="CHEBI:57823"/>
        <dbReference type="ChEBI" id="CHEBI:58262"/>
        <dbReference type="EC" id="2.7.7.60"/>
    </reaction>
</comment>
<comment type="catalytic activity">
    <reaction evidence="1">
        <text>4-CDP-2-C-methyl-D-erythritol 2-phosphate = 2-C-methyl-D-erythritol 2,4-cyclic diphosphate + CMP</text>
        <dbReference type="Rhea" id="RHEA:23864"/>
        <dbReference type="ChEBI" id="CHEBI:57919"/>
        <dbReference type="ChEBI" id="CHEBI:58483"/>
        <dbReference type="ChEBI" id="CHEBI:60377"/>
        <dbReference type="EC" id="4.6.1.12"/>
    </reaction>
</comment>
<comment type="cofactor">
    <cofactor evidence="1">
        <name>a divalent metal cation</name>
        <dbReference type="ChEBI" id="CHEBI:60240"/>
    </cofactor>
</comment>
<comment type="pathway">
    <text evidence="1">Isoprenoid biosynthesis; isopentenyl diphosphate biosynthesis via DXP pathway; isopentenyl diphosphate from 1-deoxy-D-xylulose 5-phosphate: step 2/6.</text>
</comment>
<comment type="pathway">
    <text evidence="1">Isoprenoid biosynthesis; isopentenyl diphosphate biosynthesis via DXP pathway; isopentenyl diphosphate from 1-deoxy-D-xylulose 5-phosphate: step 4/6.</text>
</comment>
<comment type="similarity">
    <text evidence="1">In the N-terminal section; belongs to the IspD/TarI cytidylyltransferase family. IspD subfamily.</text>
</comment>
<comment type="similarity">
    <text evidence="1">In the C-terminal section; belongs to the IspF family.</text>
</comment>
<feature type="chain" id="PRO_1000146272" description="Bifunctional enzyme IspD/IspF">
    <location>
        <begin position="1"/>
        <end position="406"/>
    </location>
</feature>
<feature type="region of interest" description="2-C-methyl-D-erythritol 4-phosphate cytidylyltransferase" evidence="1">
    <location>
        <begin position="1"/>
        <end position="247"/>
    </location>
</feature>
<feature type="region of interest" description="2-C-methyl-D-erythritol 2,4-cyclodiphosphate synthase" evidence="1">
    <location>
        <begin position="248"/>
        <end position="406"/>
    </location>
</feature>
<feature type="binding site" evidence="1">
    <location>
        <begin position="254"/>
        <end position="256"/>
    </location>
    <ligand>
        <name>4-CDP-2-C-methyl-D-erythritol 2-phosphate</name>
        <dbReference type="ChEBI" id="CHEBI:57919"/>
    </ligand>
</feature>
<feature type="binding site" evidence="1">
    <location>
        <position position="254"/>
    </location>
    <ligand>
        <name>a divalent metal cation</name>
        <dbReference type="ChEBI" id="CHEBI:60240"/>
    </ligand>
</feature>
<feature type="binding site" evidence="1">
    <location>
        <position position="256"/>
    </location>
    <ligand>
        <name>a divalent metal cation</name>
        <dbReference type="ChEBI" id="CHEBI:60240"/>
    </ligand>
</feature>
<feature type="binding site" evidence="1">
    <location>
        <begin position="280"/>
        <end position="281"/>
    </location>
    <ligand>
        <name>4-CDP-2-C-methyl-D-erythritol 2-phosphate</name>
        <dbReference type="ChEBI" id="CHEBI:57919"/>
    </ligand>
</feature>
<feature type="binding site" evidence="1">
    <location>
        <position position="288"/>
    </location>
    <ligand>
        <name>a divalent metal cation</name>
        <dbReference type="ChEBI" id="CHEBI:60240"/>
    </ligand>
</feature>
<feature type="binding site" evidence="1">
    <location>
        <begin position="302"/>
        <end position="304"/>
    </location>
    <ligand>
        <name>4-CDP-2-C-methyl-D-erythritol 2-phosphate</name>
        <dbReference type="ChEBI" id="CHEBI:57919"/>
    </ligand>
</feature>
<feature type="binding site" evidence="1">
    <location>
        <begin position="307"/>
        <end position="311"/>
    </location>
    <ligand>
        <name>4-CDP-2-C-methyl-D-erythritol 2-phosphate</name>
        <dbReference type="ChEBI" id="CHEBI:57919"/>
    </ligand>
</feature>
<feature type="binding site" evidence="1">
    <location>
        <begin position="378"/>
        <end position="381"/>
    </location>
    <ligand>
        <name>4-CDP-2-C-methyl-D-erythritol 2-phosphate</name>
        <dbReference type="ChEBI" id="CHEBI:57919"/>
    </ligand>
</feature>
<feature type="binding site" evidence="1">
    <location>
        <position position="385"/>
    </location>
    <ligand>
        <name>4-CDP-2-C-methyl-D-erythritol 2-phosphate</name>
        <dbReference type="ChEBI" id="CHEBI:57919"/>
    </ligand>
</feature>
<feature type="binding site" evidence="1">
    <location>
        <position position="388"/>
    </location>
    <ligand>
        <name>4-CDP-2-C-methyl-D-erythritol 2-phosphate</name>
        <dbReference type="ChEBI" id="CHEBI:57919"/>
    </ligand>
</feature>
<feature type="site" description="Transition state stabilizer" evidence="1">
    <location>
        <position position="48"/>
    </location>
</feature>
<feature type="site" description="Transition state stabilizer" evidence="1">
    <location>
        <position position="55"/>
    </location>
</feature>
<feature type="site" description="Positions MEP for the nucleophilic attack" evidence="1">
    <location>
        <position position="175"/>
    </location>
</feature>
<feature type="site" description="Positions MEP for the nucleophilic attack" evidence="1">
    <location>
        <position position="227"/>
    </location>
</feature>
<feature type="site" description="Transition state stabilizer" evidence="1">
    <location>
        <position position="280"/>
    </location>
</feature>
<feature type="site" description="Transition state stabilizer" evidence="1">
    <location>
        <position position="379"/>
    </location>
</feature>
<dbReference type="EC" id="2.7.7.60" evidence="1"/>
<dbReference type="EC" id="4.6.1.12" evidence="1"/>
<dbReference type="EMBL" id="CP001217">
    <property type="protein sequence ID" value="ACJ07581.1"/>
    <property type="molecule type" value="Genomic_DNA"/>
</dbReference>
<dbReference type="SMR" id="B6JL03"/>
<dbReference type="KEGG" id="hpp:HPP12_0424"/>
<dbReference type="HOGENOM" id="CLU_042800_2_6_7"/>
<dbReference type="UniPathway" id="UPA00056">
    <property type="reaction ID" value="UER00093"/>
</dbReference>
<dbReference type="UniPathway" id="UPA00056">
    <property type="reaction ID" value="UER00095"/>
</dbReference>
<dbReference type="Proteomes" id="UP000008198">
    <property type="component" value="Chromosome"/>
</dbReference>
<dbReference type="GO" id="GO:0008685">
    <property type="term" value="F:2-C-methyl-D-erythritol 2,4-cyclodiphosphate synthase activity"/>
    <property type="evidence" value="ECO:0007669"/>
    <property type="project" value="UniProtKB-UniRule"/>
</dbReference>
<dbReference type="GO" id="GO:0050518">
    <property type="term" value="F:2-C-methyl-D-erythritol 4-phosphate cytidylyltransferase activity"/>
    <property type="evidence" value="ECO:0007669"/>
    <property type="project" value="UniProtKB-UniRule"/>
</dbReference>
<dbReference type="GO" id="GO:0046872">
    <property type="term" value="F:metal ion binding"/>
    <property type="evidence" value="ECO:0007669"/>
    <property type="project" value="UniProtKB-KW"/>
</dbReference>
<dbReference type="GO" id="GO:0019288">
    <property type="term" value="P:isopentenyl diphosphate biosynthetic process, methylerythritol 4-phosphate pathway"/>
    <property type="evidence" value="ECO:0007669"/>
    <property type="project" value="UniProtKB-UniRule"/>
</dbReference>
<dbReference type="GO" id="GO:0016114">
    <property type="term" value="P:terpenoid biosynthetic process"/>
    <property type="evidence" value="ECO:0007669"/>
    <property type="project" value="InterPro"/>
</dbReference>
<dbReference type="CDD" id="cd00554">
    <property type="entry name" value="MECDP_synthase"/>
    <property type="match status" value="1"/>
</dbReference>
<dbReference type="FunFam" id="3.30.1330.50:FF:000005">
    <property type="entry name" value="Bifunctional enzyme IspD/IspF"/>
    <property type="match status" value="1"/>
</dbReference>
<dbReference type="FunFam" id="3.90.550.10:FF:000259">
    <property type="entry name" value="Bifunctional enzyme IspD/IspF"/>
    <property type="match status" value="1"/>
</dbReference>
<dbReference type="Gene3D" id="3.30.1330.50">
    <property type="entry name" value="2-C-methyl-D-erythritol 2,4-cyclodiphosphate synthase"/>
    <property type="match status" value="1"/>
</dbReference>
<dbReference type="Gene3D" id="3.90.550.10">
    <property type="entry name" value="Spore Coat Polysaccharide Biosynthesis Protein SpsA, Chain A"/>
    <property type="match status" value="1"/>
</dbReference>
<dbReference type="HAMAP" id="MF_01520">
    <property type="entry name" value="IspDF"/>
    <property type="match status" value="1"/>
</dbReference>
<dbReference type="HAMAP" id="MF_00107">
    <property type="entry name" value="IspF"/>
    <property type="match status" value="1"/>
</dbReference>
<dbReference type="InterPro" id="IPR026596">
    <property type="entry name" value="IspD/F"/>
</dbReference>
<dbReference type="InterPro" id="IPR034683">
    <property type="entry name" value="IspD/TarI"/>
</dbReference>
<dbReference type="InterPro" id="IPR018294">
    <property type="entry name" value="ISPD_synthase_CS"/>
</dbReference>
<dbReference type="InterPro" id="IPR003526">
    <property type="entry name" value="MECDP_synthase"/>
</dbReference>
<dbReference type="InterPro" id="IPR020555">
    <property type="entry name" value="MECDP_synthase_CS"/>
</dbReference>
<dbReference type="InterPro" id="IPR036571">
    <property type="entry name" value="MECDP_synthase_sf"/>
</dbReference>
<dbReference type="InterPro" id="IPR029044">
    <property type="entry name" value="Nucleotide-diphossugar_trans"/>
</dbReference>
<dbReference type="NCBIfam" id="TIGR00151">
    <property type="entry name" value="ispF"/>
    <property type="match status" value="1"/>
</dbReference>
<dbReference type="NCBIfam" id="NF006899">
    <property type="entry name" value="PRK09382.1"/>
    <property type="match status" value="1"/>
</dbReference>
<dbReference type="PANTHER" id="PTHR43181">
    <property type="entry name" value="2-C-METHYL-D-ERYTHRITOL 2,4-CYCLODIPHOSPHATE SYNTHASE, CHLOROPLASTIC"/>
    <property type="match status" value="1"/>
</dbReference>
<dbReference type="PANTHER" id="PTHR43181:SF1">
    <property type="entry name" value="2-C-METHYL-D-ERYTHRITOL 2,4-CYCLODIPHOSPHATE SYNTHASE, CHLOROPLASTIC"/>
    <property type="match status" value="1"/>
</dbReference>
<dbReference type="Pfam" id="PF01128">
    <property type="entry name" value="IspD"/>
    <property type="match status" value="1"/>
</dbReference>
<dbReference type="Pfam" id="PF02542">
    <property type="entry name" value="YgbB"/>
    <property type="match status" value="1"/>
</dbReference>
<dbReference type="SUPFAM" id="SSF69765">
    <property type="entry name" value="IpsF-like"/>
    <property type="match status" value="1"/>
</dbReference>
<dbReference type="SUPFAM" id="SSF53448">
    <property type="entry name" value="Nucleotide-diphospho-sugar transferases"/>
    <property type="match status" value="1"/>
</dbReference>
<dbReference type="PROSITE" id="PS01295">
    <property type="entry name" value="ISPD"/>
    <property type="match status" value="1"/>
</dbReference>
<dbReference type="PROSITE" id="PS01350">
    <property type="entry name" value="ISPF"/>
    <property type="match status" value="1"/>
</dbReference>
<name>ISPDF_HELP2</name>
<organism>
    <name type="scientific">Helicobacter pylori (strain P12)</name>
    <dbReference type="NCBI Taxonomy" id="570508"/>
    <lineage>
        <taxon>Bacteria</taxon>
        <taxon>Pseudomonadati</taxon>
        <taxon>Campylobacterota</taxon>
        <taxon>Epsilonproteobacteria</taxon>
        <taxon>Campylobacterales</taxon>
        <taxon>Helicobacteraceae</taxon>
        <taxon>Helicobacter</taxon>
    </lineage>
</organism>
<gene>
    <name evidence="1" type="primary">ispDF</name>
    <name type="ordered locus">HPP12_0424</name>
</gene>
<proteinExistence type="inferred from homology"/>
<protein>
    <recommendedName>
        <fullName evidence="1">Bifunctional enzyme IspD/IspF</fullName>
    </recommendedName>
    <domain>
        <recommendedName>
            <fullName evidence="1">2-C-methyl-D-erythritol 4-phosphate cytidylyltransferase</fullName>
            <ecNumber evidence="1">2.7.7.60</ecNumber>
        </recommendedName>
        <alternativeName>
            <fullName evidence="1">4-diphosphocytidyl-2C-methyl-D-erythritol synthase</fullName>
        </alternativeName>
        <alternativeName>
            <fullName evidence="1">MEP cytidylyltransferase</fullName>
            <shortName evidence="1">MCT</shortName>
        </alternativeName>
    </domain>
    <domain>
        <recommendedName>
            <fullName evidence="1">2-C-methyl-D-erythritol 2,4-cyclodiphosphate synthase</fullName>
            <shortName evidence="1">MECDP-synthase</shortName>
            <shortName evidence="1">MECPP-synthase</shortName>
            <shortName evidence="1">MECPS</shortName>
            <ecNumber evidence="1">4.6.1.12</ecNumber>
        </recommendedName>
    </domain>
</protein>
<sequence>MSLIRVNGEAFKLSLESLEEDPFETKETLETLVKQTSVVLLAAGESRRFSQIIKKQWLRSNHTPLWLSVYESFKEALDFKEILLIVSELDYIYIQRHYPEIKLVKGGASRQESVRNALKIIDSTYTLTSDVARGLANMEALKSLFLTLQQTSHYCIAPYLPCYDTAIYYNEALDREAIKLIQTPQLSHTKALQSALNQGDFKDESSAILQAFPNRVSYIEGSKNLHKLTTSGDLKHFALFFNPAKDTFIGMGFDTHAFIKDKPMVLGGVVLDCEFGLKAHSDGDALLHAVIDAILGAIKGGDIGEWFPDNDPKYKNASSKELLKIVLDFSQSIGFELFEMGATIFSEIPKITPYKPAILENLSQLLGLEKSQISLKATTMEKMGFIGKQEGLLVQAHVSMRYKQKL</sequence>